<accession>Q7WE97</accession>
<organism>
    <name type="scientific">Bordetella bronchiseptica (strain ATCC BAA-588 / NCTC 13252 / RB50)</name>
    <name type="common">Alcaligenes bronchisepticus</name>
    <dbReference type="NCBI Taxonomy" id="257310"/>
    <lineage>
        <taxon>Bacteria</taxon>
        <taxon>Pseudomonadati</taxon>
        <taxon>Pseudomonadota</taxon>
        <taxon>Betaproteobacteria</taxon>
        <taxon>Burkholderiales</taxon>
        <taxon>Alcaligenaceae</taxon>
        <taxon>Bordetella</taxon>
    </lineage>
</organism>
<evidence type="ECO:0000255" key="1">
    <source>
        <dbReference type="HAMAP-Rule" id="MF_00625"/>
    </source>
</evidence>
<feature type="chain" id="PRO_0000127616" description="Selenide, water dikinase">
    <location>
        <begin position="1"/>
        <end position="344"/>
    </location>
</feature>
<feature type="active site" evidence="1">
    <location>
        <position position="16"/>
    </location>
</feature>
<feature type="binding site" description="in other chain" evidence="1">
    <location>
        <position position="19"/>
    </location>
    <ligand>
        <name>ATP</name>
        <dbReference type="ChEBI" id="CHEBI:30616"/>
        <note>ligand shared between dimeric partners</note>
    </ligand>
</feature>
<feature type="binding site" description="in other chain" evidence="1">
    <location>
        <begin position="47"/>
        <end position="49"/>
    </location>
    <ligand>
        <name>ATP</name>
        <dbReference type="ChEBI" id="CHEBI:30616"/>
        <note>ligand shared between dimeric partners</note>
    </ligand>
</feature>
<feature type="binding site" evidence="1">
    <location>
        <position position="50"/>
    </location>
    <ligand>
        <name>Mg(2+)</name>
        <dbReference type="ChEBI" id="CHEBI:18420"/>
    </ligand>
</feature>
<feature type="binding site" description="in other chain" evidence="1">
    <location>
        <position position="67"/>
    </location>
    <ligand>
        <name>ATP</name>
        <dbReference type="ChEBI" id="CHEBI:30616"/>
        <note>ligand shared between dimeric partners</note>
    </ligand>
</feature>
<feature type="binding site" description="in other chain" evidence="1">
    <location>
        <position position="90"/>
    </location>
    <ligand>
        <name>ATP</name>
        <dbReference type="ChEBI" id="CHEBI:30616"/>
        <note>ligand shared between dimeric partners</note>
    </ligand>
</feature>
<feature type="binding site" evidence="1">
    <location>
        <position position="90"/>
    </location>
    <ligand>
        <name>Mg(2+)</name>
        <dbReference type="ChEBI" id="CHEBI:18420"/>
    </ligand>
</feature>
<feature type="binding site" evidence="1">
    <location>
        <begin position="138"/>
        <end position="140"/>
    </location>
    <ligand>
        <name>ATP</name>
        <dbReference type="ChEBI" id="CHEBI:30616"/>
        <note>ligand shared between dimeric partners</note>
    </ligand>
</feature>
<feature type="binding site" evidence="1">
    <location>
        <position position="226"/>
    </location>
    <ligand>
        <name>Mg(2+)</name>
        <dbReference type="ChEBI" id="CHEBI:18420"/>
    </ligand>
</feature>
<feature type="site" description="Important for catalytic activity" evidence="1">
    <location>
        <position position="19"/>
    </location>
</feature>
<gene>
    <name evidence="1" type="primary">selD</name>
    <name type="synonym">fdhB</name>
    <name type="ordered locus">BB4738</name>
</gene>
<keyword id="KW-0067">ATP-binding</keyword>
<keyword id="KW-0418">Kinase</keyword>
<keyword id="KW-0460">Magnesium</keyword>
<keyword id="KW-0479">Metal-binding</keyword>
<keyword id="KW-0547">Nucleotide-binding</keyword>
<keyword id="KW-0711">Selenium</keyword>
<keyword id="KW-0808">Transferase</keyword>
<reference key="1">
    <citation type="journal article" date="2003" name="Nat. Genet.">
        <title>Comparative analysis of the genome sequences of Bordetella pertussis, Bordetella parapertussis and Bordetella bronchiseptica.</title>
        <authorList>
            <person name="Parkhill J."/>
            <person name="Sebaihia M."/>
            <person name="Preston A."/>
            <person name="Murphy L.D."/>
            <person name="Thomson N.R."/>
            <person name="Harris D.E."/>
            <person name="Holden M.T.G."/>
            <person name="Churcher C.M."/>
            <person name="Bentley S.D."/>
            <person name="Mungall K.L."/>
            <person name="Cerdeno-Tarraga A.-M."/>
            <person name="Temple L."/>
            <person name="James K.D."/>
            <person name="Harris B."/>
            <person name="Quail M.A."/>
            <person name="Achtman M."/>
            <person name="Atkin R."/>
            <person name="Baker S."/>
            <person name="Basham D."/>
            <person name="Bason N."/>
            <person name="Cherevach I."/>
            <person name="Chillingworth T."/>
            <person name="Collins M."/>
            <person name="Cronin A."/>
            <person name="Davis P."/>
            <person name="Doggett J."/>
            <person name="Feltwell T."/>
            <person name="Goble A."/>
            <person name="Hamlin N."/>
            <person name="Hauser H."/>
            <person name="Holroyd S."/>
            <person name="Jagels K."/>
            <person name="Leather S."/>
            <person name="Moule S."/>
            <person name="Norberczak H."/>
            <person name="O'Neil S."/>
            <person name="Ormond D."/>
            <person name="Price C."/>
            <person name="Rabbinowitsch E."/>
            <person name="Rutter S."/>
            <person name="Sanders M."/>
            <person name="Saunders D."/>
            <person name="Seeger K."/>
            <person name="Sharp S."/>
            <person name="Simmonds M."/>
            <person name="Skelton J."/>
            <person name="Squares R."/>
            <person name="Squares S."/>
            <person name="Stevens K."/>
            <person name="Unwin L."/>
            <person name="Whitehead S."/>
            <person name="Barrell B.G."/>
            <person name="Maskell D.J."/>
        </authorList>
    </citation>
    <scope>NUCLEOTIDE SEQUENCE [LARGE SCALE GENOMIC DNA]</scope>
    <source>
        <strain>ATCC BAA-588 / NCTC 13252 / RB50</strain>
    </source>
</reference>
<proteinExistence type="inferred from homology"/>
<comment type="function">
    <text evidence="1">Synthesizes selenophosphate from selenide and ATP.</text>
</comment>
<comment type="catalytic activity">
    <reaction evidence="1">
        <text>hydrogenselenide + ATP + H2O = selenophosphate + AMP + phosphate + 2 H(+)</text>
        <dbReference type="Rhea" id="RHEA:18737"/>
        <dbReference type="ChEBI" id="CHEBI:15377"/>
        <dbReference type="ChEBI" id="CHEBI:15378"/>
        <dbReference type="ChEBI" id="CHEBI:16144"/>
        <dbReference type="ChEBI" id="CHEBI:29317"/>
        <dbReference type="ChEBI" id="CHEBI:30616"/>
        <dbReference type="ChEBI" id="CHEBI:43474"/>
        <dbReference type="ChEBI" id="CHEBI:456215"/>
        <dbReference type="EC" id="2.7.9.3"/>
    </reaction>
</comment>
<comment type="cofactor">
    <cofactor evidence="1">
        <name>Mg(2+)</name>
        <dbReference type="ChEBI" id="CHEBI:18420"/>
    </cofactor>
    <text evidence="1">Binds 1 Mg(2+) ion per monomer.</text>
</comment>
<comment type="subunit">
    <text evidence="1">Homodimer.</text>
</comment>
<comment type="similarity">
    <text evidence="1">Belongs to the selenophosphate synthase 1 family. Class I subfamily.</text>
</comment>
<sequence length="344" mass="36113">MNTPVRLTQYSHGAGCGCKISPKVLEIILAGSGAQNLDPRLWVGNASRDDAAVYALDDQRGVVSTTDFFMPIVDDPFDFGRIAATNAISDIYAMGGDPLLAIAILGWPVNVLPPEVAREVVRGGRAACDEAGIALAGGHSIDAPEPIFGLAVTGVVDKARLKRNDTATAGCRLYLTKPLGIGILTTAEKKSRLRPEDVNLARDWMCTLNKPGSRFGALAGVKAMTDVTGFGLLGHLVEMADGSGVSARIEYAKVPRLPGVEHYLAEGCVPGGTGRNFDSYGARIAPLPQDRVDLLCDPQTSGGLLVAVEPAGEAEFLAAAGELGLRLEPIGELVAQRPYAVEVL</sequence>
<name>SELD_BORBR</name>
<protein>
    <recommendedName>
        <fullName evidence="1">Selenide, water dikinase</fullName>
        <ecNumber evidence="1">2.7.9.3</ecNumber>
    </recommendedName>
    <alternativeName>
        <fullName evidence="1">Selenium donor protein</fullName>
    </alternativeName>
    <alternativeName>
        <fullName evidence="1">Selenophosphate synthase</fullName>
    </alternativeName>
</protein>
<dbReference type="EC" id="2.7.9.3" evidence="1"/>
<dbReference type="EMBL" id="BX640451">
    <property type="protein sequence ID" value="CAE35101.1"/>
    <property type="molecule type" value="Genomic_DNA"/>
</dbReference>
<dbReference type="RefSeq" id="WP_003815585.1">
    <property type="nucleotide sequence ID" value="NC_002927.3"/>
</dbReference>
<dbReference type="SMR" id="Q7WE97"/>
<dbReference type="GeneID" id="56476762"/>
<dbReference type="KEGG" id="bbr:BB4738"/>
<dbReference type="eggNOG" id="COG0709">
    <property type="taxonomic scope" value="Bacteria"/>
</dbReference>
<dbReference type="HOGENOM" id="CLU_032859_0_1_4"/>
<dbReference type="Proteomes" id="UP000001027">
    <property type="component" value="Chromosome"/>
</dbReference>
<dbReference type="GO" id="GO:0005737">
    <property type="term" value="C:cytoplasm"/>
    <property type="evidence" value="ECO:0007669"/>
    <property type="project" value="TreeGrafter"/>
</dbReference>
<dbReference type="GO" id="GO:0005524">
    <property type="term" value="F:ATP binding"/>
    <property type="evidence" value="ECO:0007669"/>
    <property type="project" value="UniProtKB-UniRule"/>
</dbReference>
<dbReference type="GO" id="GO:0000287">
    <property type="term" value="F:magnesium ion binding"/>
    <property type="evidence" value="ECO:0007669"/>
    <property type="project" value="UniProtKB-UniRule"/>
</dbReference>
<dbReference type="GO" id="GO:0004756">
    <property type="term" value="F:selenide, water dikinase activity"/>
    <property type="evidence" value="ECO:0007669"/>
    <property type="project" value="UniProtKB-UniRule"/>
</dbReference>
<dbReference type="GO" id="GO:0016260">
    <property type="term" value="P:selenocysteine biosynthetic process"/>
    <property type="evidence" value="ECO:0007669"/>
    <property type="project" value="InterPro"/>
</dbReference>
<dbReference type="CDD" id="cd02195">
    <property type="entry name" value="SelD"/>
    <property type="match status" value="1"/>
</dbReference>
<dbReference type="FunFam" id="3.30.1330.10:FF:000003">
    <property type="entry name" value="Selenide, water dikinase"/>
    <property type="match status" value="1"/>
</dbReference>
<dbReference type="FunFam" id="3.90.650.10:FF:000004">
    <property type="entry name" value="Selenide, water dikinase"/>
    <property type="match status" value="1"/>
</dbReference>
<dbReference type="Gene3D" id="3.90.650.10">
    <property type="entry name" value="PurM-like C-terminal domain"/>
    <property type="match status" value="1"/>
</dbReference>
<dbReference type="Gene3D" id="3.30.1330.10">
    <property type="entry name" value="PurM-like, N-terminal domain"/>
    <property type="match status" value="1"/>
</dbReference>
<dbReference type="HAMAP" id="MF_00625">
    <property type="entry name" value="SelD"/>
    <property type="match status" value="1"/>
</dbReference>
<dbReference type="InterPro" id="IPR010918">
    <property type="entry name" value="PurM-like_C_dom"/>
</dbReference>
<dbReference type="InterPro" id="IPR036676">
    <property type="entry name" value="PurM-like_C_sf"/>
</dbReference>
<dbReference type="InterPro" id="IPR016188">
    <property type="entry name" value="PurM-like_N"/>
</dbReference>
<dbReference type="InterPro" id="IPR036921">
    <property type="entry name" value="PurM-like_N_sf"/>
</dbReference>
<dbReference type="InterPro" id="IPR023061">
    <property type="entry name" value="SelD_I"/>
</dbReference>
<dbReference type="InterPro" id="IPR004536">
    <property type="entry name" value="SPS/SelD"/>
</dbReference>
<dbReference type="NCBIfam" id="NF002098">
    <property type="entry name" value="PRK00943.1"/>
    <property type="match status" value="1"/>
</dbReference>
<dbReference type="NCBIfam" id="TIGR00476">
    <property type="entry name" value="selD"/>
    <property type="match status" value="1"/>
</dbReference>
<dbReference type="PANTHER" id="PTHR10256:SF0">
    <property type="entry name" value="INACTIVE SELENIDE, WATER DIKINASE-LIKE PROTEIN-RELATED"/>
    <property type="match status" value="1"/>
</dbReference>
<dbReference type="PANTHER" id="PTHR10256">
    <property type="entry name" value="SELENIDE, WATER DIKINASE"/>
    <property type="match status" value="1"/>
</dbReference>
<dbReference type="Pfam" id="PF00586">
    <property type="entry name" value="AIRS"/>
    <property type="match status" value="1"/>
</dbReference>
<dbReference type="Pfam" id="PF02769">
    <property type="entry name" value="AIRS_C"/>
    <property type="match status" value="1"/>
</dbReference>
<dbReference type="PIRSF" id="PIRSF036407">
    <property type="entry name" value="Selenphspht_syn"/>
    <property type="match status" value="1"/>
</dbReference>
<dbReference type="SUPFAM" id="SSF56042">
    <property type="entry name" value="PurM C-terminal domain-like"/>
    <property type="match status" value="1"/>
</dbReference>
<dbReference type="SUPFAM" id="SSF55326">
    <property type="entry name" value="PurM N-terminal domain-like"/>
    <property type="match status" value="1"/>
</dbReference>